<dbReference type="EC" id="5.1.3.3" evidence="1"/>
<dbReference type="EMBL" id="BC081876">
    <property type="protein sequence ID" value="AAH81876.1"/>
    <property type="molecule type" value="mRNA"/>
</dbReference>
<dbReference type="RefSeq" id="NP_001007705.1">
    <property type="nucleotide sequence ID" value="NM_001007704.1"/>
</dbReference>
<dbReference type="SMR" id="Q66HG4"/>
<dbReference type="FunCoup" id="Q66HG4">
    <property type="interactions" value="719"/>
</dbReference>
<dbReference type="STRING" id="10116.ENSRNOP00000009221"/>
<dbReference type="iPTMnet" id="Q66HG4"/>
<dbReference type="PhosphoSitePlus" id="Q66HG4"/>
<dbReference type="PaxDb" id="10116-ENSRNOP00000009221"/>
<dbReference type="GeneID" id="313843"/>
<dbReference type="KEGG" id="rno:313843"/>
<dbReference type="UCSC" id="RGD:1359459">
    <property type="organism name" value="rat"/>
</dbReference>
<dbReference type="AGR" id="RGD:1359459"/>
<dbReference type="CTD" id="130589"/>
<dbReference type="RGD" id="1359459">
    <property type="gene designation" value="Galm"/>
</dbReference>
<dbReference type="VEuPathDB" id="HostDB:ENSRNOG00000007023"/>
<dbReference type="eggNOG" id="KOG1604">
    <property type="taxonomic scope" value="Eukaryota"/>
</dbReference>
<dbReference type="HOGENOM" id="CLU_031753_2_0_1"/>
<dbReference type="InParanoid" id="Q66HG4"/>
<dbReference type="OrthoDB" id="1859at9989"/>
<dbReference type="PhylomeDB" id="Q66HG4"/>
<dbReference type="TreeFam" id="TF324207"/>
<dbReference type="UniPathway" id="UPA00214"/>
<dbReference type="UniPathway" id="UPA00242"/>
<dbReference type="PRO" id="PR:Q66HG4"/>
<dbReference type="Proteomes" id="UP000002494">
    <property type="component" value="Chromosome 6"/>
</dbReference>
<dbReference type="Bgee" id="ENSRNOG00000007023">
    <property type="expression patterns" value="Expressed in adult mammalian kidney and 19 other cell types or tissues"/>
</dbReference>
<dbReference type="GO" id="GO:0005737">
    <property type="term" value="C:cytoplasm"/>
    <property type="evidence" value="ECO:0007669"/>
    <property type="project" value="UniProtKB-SubCell"/>
</dbReference>
<dbReference type="GO" id="GO:0004034">
    <property type="term" value="F:aldose 1-epimerase activity"/>
    <property type="evidence" value="ECO:0000266"/>
    <property type="project" value="RGD"/>
</dbReference>
<dbReference type="GO" id="GO:0030246">
    <property type="term" value="F:carbohydrate binding"/>
    <property type="evidence" value="ECO:0007669"/>
    <property type="project" value="InterPro"/>
</dbReference>
<dbReference type="GO" id="GO:0005975">
    <property type="term" value="P:carbohydrate metabolic process"/>
    <property type="evidence" value="ECO:0000266"/>
    <property type="project" value="RGD"/>
</dbReference>
<dbReference type="GO" id="GO:0033499">
    <property type="term" value="P:galactose catabolic process via UDP-galactose, Leloir pathway"/>
    <property type="evidence" value="ECO:0000266"/>
    <property type="project" value="RGD"/>
</dbReference>
<dbReference type="GO" id="GO:0006012">
    <property type="term" value="P:galactose metabolic process"/>
    <property type="evidence" value="ECO:0000266"/>
    <property type="project" value="RGD"/>
</dbReference>
<dbReference type="GO" id="GO:0006006">
    <property type="term" value="P:glucose metabolic process"/>
    <property type="evidence" value="ECO:0000266"/>
    <property type="project" value="RGD"/>
</dbReference>
<dbReference type="CDD" id="cd09019">
    <property type="entry name" value="galactose_mutarotase_like"/>
    <property type="match status" value="1"/>
</dbReference>
<dbReference type="FunFam" id="2.70.98.10:FF:000003">
    <property type="entry name" value="Aldose 1-epimerase"/>
    <property type="match status" value="1"/>
</dbReference>
<dbReference type="Gene3D" id="2.70.98.10">
    <property type="match status" value="1"/>
</dbReference>
<dbReference type="InterPro" id="IPR018052">
    <property type="entry name" value="Ald1_epimerase_CS"/>
</dbReference>
<dbReference type="InterPro" id="IPR015443">
    <property type="entry name" value="Aldose_1-epimerase"/>
</dbReference>
<dbReference type="InterPro" id="IPR008183">
    <property type="entry name" value="Aldose_1/G6P_1-epimerase"/>
</dbReference>
<dbReference type="InterPro" id="IPR011013">
    <property type="entry name" value="Gal_mutarotase_sf_dom"/>
</dbReference>
<dbReference type="InterPro" id="IPR047215">
    <property type="entry name" value="Galactose_mutarotase-like"/>
</dbReference>
<dbReference type="InterPro" id="IPR014718">
    <property type="entry name" value="GH-type_carb-bd"/>
</dbReference>
<dbReference type="NCBIfam" id="NF008277">
    <property type="entry name" value="PRK11055.1"/>
    <property type="match status" value="1"/>
</dbReference>
<dbReference type="PANTHER" id="PTHR10091">
    <property type="entry name" value="ALDOSE-1-EPIMERASE"/>
    <property type="match status" value="1"/>
</dbReference>
<dbReference type="PANTHER" id="PTHR10091:SF0">
    <property type="entry name" value="GALACTOSE MUTAROTASE"/>
    <property type="match status" value="1"/>
</dbReference>
<dbReference type="Pfam" id="PF01263">
    <property type="entry name" value="Aldose_epim"/>
    <property type="match status" value="1"/>
</dbReference>
<dbReference type="PIRSF" id="PIRSF005096">
    <property type="entry name" value="GALM"/>
    <property type="match status" value="1"/>
</dbReference>
<dbReference type="SUPFAM" id="SSF74650">
    <property type="entry name" value="Galactose mutarotase-like"/>
    <property type="match status" value="1"/>
</dbReference>
<dbReference type="PROSITE" id="PS00545">
    <property type="entry name" value="ALDOSE_1_EPIMERASE"/>
    <property type="match status" value="1"/>
</dbReference>
<name>GALM_RAT</name>
<accession>Q66HG4</accession>
<proteinExistence type="evidence at protein level"/>
<reference key="1">
    <citation type="journal article" date="2004" name="Genome Res.">
        <title>The status, quality, and expansion of the NIH full-length cDNA project: the Mammalian Gene Collection (MGC).</title>
        <authorList>
            <consortium name="The MGC Project Team"/>
        </authorList>
    </citation>
    <scope>NUCLEOTIDE SEQUENCE [LARGE SCALE MRNA]</scope>
    <source>
        <tissue>Kidney</tissue>
    </source>
</reference>
<reference key="2">
    <citation type="submission" date="2006-11" db="UniProtKB">
        <authorList>
            <person name="Lubec G."/>
            <person name="Afjehi-Sadat L."/>
        </authorList>
    </citation>
    <scope>PROTEIN SEQUENCE OF 69-78 AND 146-162</scope>
    <scope>IDENTIFICATION BY MASS SPECTROMETRY</scope>
    <source>
        <strain>Sprague-Dawley</strain>
        <tissue>Spinal cord</tissue>
    </source>
</reference>
<reference key="3">
    <citation type="journal article" date="2012" name="Nat. Commun.">
        <title>Quantitative maps of protein phosphorylation sites across 14 different rat organs and tissues.</title>
        <authorList>
            <person name="Lundby A."/>
            <person name="Secher A."/>
            <person name="Lage K."/>
            <person name="Nordsborg N.B."/>
            <person name="Dmytriyev A."/>
            <person name="Lundby C."/>
            <person name="Olsen J.V."/>
        </authorList>
    </citation>
    <scope>PHOSPHORYLATION [LARGE SCALE ANALYSIS] AT SER-14 AND SER-124</scope>
    <scope>IDENTIFICATION BY MASS SPECTROMETRY [LARGE SCALE ANALYSIS]</scope>
</reference>
<keyword id="KW-0119">Carbohydrate metabolism</keyword>
<keyword id="KW-0963">Cytoplasm</keyword>
<keyword id="KW-0903">Direct protein sequencing</keyword>
<keyword id="KW-0413">Isomerase</keyword>
<keyword id="KW-0597">Phosphoprotein</keyword>
<keyword id="KW-1185">Reference proteome</keyword>
<sequence>MVSVTRTVFGELPSGGGAVEKFQLRSDQLNVDIISWGCTITALQVKDRQGKASDVVLGFAELEGYLQKQPYFGAVVGRVANRIAKGRFTVDGKEYHLPINREPNSLHGGFRGFDKVLWTPQVLSNGVQFSRVSPDGEEGYPGELKVWVTYTLDGGELVVNYRAQASQTTPVNLTNHSYFNLAGQGSPDIYDHEVTIAADAYLPVDETLIPTGVIAPVEGTAFDLRKPVELGKHLQSYHIHGFDHNFCLKESKEKKFCARVHHAASGRILEVYTTQPGVQFYTGNFLDGTLKGKSGEVYPKHSGFCLETQNWPDAVNQPQFPPILLRPGEEYNHTTWFKFSVA</sequence>
<protein>
    <recommendedName>
        <fullName>Galactose mutarotase</fullName>
        <ecNumber evidence="1">5.1.3.3</ecNumber>
    </recommendedName>
    <alternativeName>
        <fullName>Aldose 1-epimerase</fullName>
    </alternativeName>
</protein>
<gene>
    <name type="primary">Galm</name>
</gene>
<organism>
    <name type="scientific">Rattus norvegicus</name>
    <name type="common">Rat</name>
    <dbReference type="NCBI Taxonomy" id="10116"/>
    <lineage>
        <taxon>Eukaryota</taxon>
        <taxon>Metazoa</taxon>
        <taxon>Chordata</taxon>
        <taxon>Craniata</taxon>
        <taxon>Vertebrata</taxon>
        <taxon>Euteleostomi</taxon>
        <taxon>Mammalia</taxon>
        <taxon>Eutheria</taxon>
        <taxon>Euarchontoglires</taxon>
        <taxon>Glires</taxon>
        <taxon>Rodentia</taxon>
        <taxon>Myomorpha</taxon>
        <taxon>Muroidea</taxon>
        <taxon>Muridae</taxon>
        <taxon>Murinae</taxon>
        <taxon>Rattus</taxon>
    </lineage>
</organism>
<evidence type="ECO:0000250" key="1">
    <source>
        <dbReference type="UniProtKB" id="Q96C23"/>
    </source>
</evidence>
<evidence type="ECO:0000305" key="2"/>
<evidence type="ECO:0007744" key="3">
    <source>
    </source>
</evidence>
<comment type="function">
    <text evidence="1">Mutarotase that catalyzes the interconversion of beta-D-galactose and alpha-D-galactose during galactose metabolism. Beta-D-galactose is metabolized in the liver into glucose 1-phosphate, the primary metabolic fuel, by the action of four enzymes that constitute the Leloir pathway: GALM, GALK1 (galactokinase), GALT (galactose-1-phosphate uridylyltransferase) and GALE (UDP-galactose-4'-epimerase). Involved in the maintenance of the equilibrium between the beta- and alpha-anomers of galactose, therefore ensuring a sufficient supply of the alpha-anomer for GALK1. Also active on D-glucose although shows a preference for galactose over glucose.</text>
</comment>
<comment type="catalytic activity">
    <reaction evidence="1">
        <text>alpha-D-galactose = beta-D-galactose</text>
        <dbReference type="Rhea" id="RHEA:28675"/>
        <dbReference type="ChEBI" id="CHEBI:27667"/>
        <dbReference type="ChEBI" id="CHEBI:28061"/>
        <dbReference type="EC" id="5.1.3.3"/>
    </reaction>
    <physiologicalReaction direction="right-to-left" evidence="1">
        <dbReference type="Rhea" id="RHEA:28677"/>
    </physiologicalReaction>
</comment>
<comment type="catalytic activity">
    <reaction evidence="1">
        <text>alpha-D-glucose = beta-D-glucose</text>
        <dbReference type="Rhea" id="RHEA:10264"/>
        <dbReference type="ChEBI" id="CHEBI:15903"/>
        <dbReference type="ChEBI" id="CHEBI:17925"/>
        <dbReference type="EC" id="5.1.3.3"/>
    </reaction>
</comment>
<comment type="pathway">
    <text evidence="1">Carbohydrate metabolism; hexose metabolism.</text>
</comment>
<comment type="pathway">
    <text evidence="1">Carbohydrate metabolism; galactose metabolism.</text>
</comment>
<comment type="subunit">
    <text evidence="1">Monomer.</text>
</comment>
<comment type="subcellular location">
    <subcellularLocation>
        <location evidence="2">Cytoplasm</location>
    </subcellularLocation>
</comment>
<comment type="similarity">
    <text evidence="2">Belongs to the aldose epimerase family.</text>
</comment>
<feature type="initiator methionine" description="Removed" evidence="1">
    <location>
        <position position="1"/>
    </location>
</feature>
<feature type="chain" id="PRO_0000197437" description="Galactose mutarotase">
    <location>
        <begin position="2"/>
        <end position="342"/>
    </location>
</feature>
<feature type="active site" description="Proton donor" evidence="1">
    <location>
        <position position="176"/>
    </location>
</feature>
<feature type="active site" description="Proton acceptor" evidence="1">
    <location>
        <position position="307"/>
    </location>
</feature>
<feature type="binding site" evidence="1">
    <location>
        <begin position="81"/>
        <end position="82"/>
    </location>
    <ligand>
        <name>beta-D-galactose</name>
        <dbReference type="ChEBI" id="CHEBI:27667"/>
    </ligand>
</feature>
<feature type="binding site" evidence="1">
    <location>
        <position position="107"/>
    </location>
    <ligand>
        <name>beta-D-galactose</name>
        <dbReference type="ChEBI" id="CHEBI:27667"/>
    </ligand>
</feature>
<feature type="binding site" evidence="1">
    <location>
        <begin position="176"/>
        <end position="178"/>
    </location>
    <ligand>
        <name>beta-D-galactose</name>
        <dbReference type="ChEBI" id="CHEBI:27667"/>
    </ligand>
</feature>
<feature type="binding site" evidence="1">
    <location>
        <position position="243"/>
    </location>
    <ligand>
        <name>beta-D-galactose</name>
        <dbReference type="ChEBI" id="CHEBI:27667"/>
    </ligand>
</feature>
<feature type="binding site" evidence="1">
    <location>
        <position position="279"/>
    </location>
    <ligand>
        <name>beta-D-galactose</name>
        <dbReference type="ChEBI" id="CHEBI:27667"/>
    </ligand>
</feature>
<feature type="binding site" evidence="1">
    <location>
        <position position="307"/>
    </location>
    <ligand>
        <name>beta-D-galactose</name>
        <dbReference type="ChEBI" id="CHEBI:27667"/>
    </ligand>
</feature>
<feature type="modified residue" description="Phosphoserine" evidence="3">
    <location>
        <position position="14"/>
    </location>
</feature>
<feature type="modified residue" description="Phosphoserine" evidence="3">
    <location>
        <position position="124"/>
    </location>
</feature>